<organism>
    <name type="scientific">Aspergillus clavatus (strain ATCC 1007 / CBS 513.65 / DSM 816 / NCTC 3887 / NRRL 1 / QM 1276 / 107)</name>
    <dbReference type="NCBI Taxonomy" id="344612"/>
    <lineage>
        <taxon>Eukaryota</taxon>
        <taxon>Fungi</taxon>
        <taxon>Dikarya</taxon>
        <taxon>Ascomycota</taxon>
        <taxon>Pezizomycotina</taxon>
        <taxon>Eurotiomycetes</taxon>
        <taxon>Eurotiomycetidae</taxon>
        <taxon>Eurotiales</taxon>
        <taxon>Aspergillaceae</taxon>
        <taxon>Aspergillus</taxon>
        <taxon>Aspergillus subgen. Fumigati</taxon>
    </lineage>
</organism>
<proteinExistence type="evidence at protein level"/>
<accession>A1C8C2</accession>
<sequence length="520" mass="59400">MEASLHFPIDASLRAAVAVISAGAFYLLNLVIYRLFLSPLAKFPGPKLAAVTSWYELYYDLVHKGKYLFEIEKMHDKYGPIVRINPFELSIRDSEYYDELYVAGSVRPTDRYEAFVEGIVDFKGSHIATIEHDLHRKRRKPLDPYFSRLGVSRLEPMLGELTEKLIVNRFESFKRTGKVVRLDHAFTAYSGDVINRLCMDDPPDVLVDDPEFSPWWYNMFHNGIATLPLFMGLPWLIHVVRLIPVSILAKLDPGTQTFNKFKMMCDDHLRVAKREKAAQGSKDTSMMDARPTIFRHLLNSDLPPSELTDDLLSKEAQVLIGTGTITTAGSLCFICYHIVVNPAIKKRLQEDLKLIMANYPAKKPTWAELETATYLQAVIKEGLRLSFGTMHRRTRVSPKQPLQFRQWTIPAGVPVGMSAYYAHRDPSVFPRPDEFLPERWLSNVTPEMSRNYVPFSRGSRRCLGMNLAYAEINHVIATLFRPGGPDFKLYETSEKDVKPAHDLIVPLPSLESKGFRVIFR</sequence>
<comment type="function">
    <text evidence="3 4 7">Cytochrome P450 monooxygenase; part of the gene cluster that mediates the biosynthesis of the sesterterpenes ophiobolins, fungal phytotoxins with potential anti-cancer activities (PubMed:23324037, PubMed:27116000). The first step of the pathway is performed by the sesterterpene synthase oblA that possesses both prenyl transferase and terpene cyclase activity, converting isopentenyl diphosphate and dimethylallyl diphosphate into geranylfarnesyl diphosphate (GFPP) and further converting GFPP into ophiobolin F, respectively (PubMed:23324037). Other sesterterpenoids (C(25) terpenoids) are found as minor products of oblA (PubMed:23324037). It is expected that ophiobolin F is then oxidized to ophiobolin A via ophiobolin C and ophiobolin B intermediates by the combined action of the cytochrome P450 monooxygenase oblB and the FAD-dependent oxidoreductase oblC (Probable). Although oblB catalyzes multistep oxygenations at C5 and C21/C7 in a relatively efficient manner, it is unable to convert ophiobolin F to ophiobolin C and produces instead several unexpected derivatives (PubMed:27116000).</text>
</comment>
<comment type="cofactor">
    <cofactor evidence="1">
        <name>heme</name>
        <dbReference type="ChEBI" id="CHEBI:30413"/>
    </cofactor>
</comment>
<comment type="pathway">
    <text evidence="4">Secondary metabolite biosynthesis; terpenoid biosynthesis.</text>
</comment>
<comment type="subcellular location">
    <subcellularLocation>
        <location evidence="2">Membrane</location>
        <topology evidence="2">Multi-pass membrane protein</topology>
    </subcellularLocation>
</comment>
<comment type="similarity">
    <text evidence="6">Belongs to the cytochrome P450 family.</text>
</comment>
<protein>
    <recommendedName>
        <fullName evidence="5">Cytochrome P450 monooxygenase oblB</fullName>
        <ecNumber evidence="4">1.-.-.-</ecNumber>
    </recommendedName>
    <alternativeName>
        <fullName evidence="5">Ophiobolin biosynthesis cluster protein B</fullName>
    </alternativeName>
</protein>
<name>OBLB_ASPCL</name>
<evidence type="ECO:0000250" key="1">
    <source>
        <dbReference type="UniProtKB" id="P04798"/>
    </source>
</evidence>
<evidence type="ECO:0000255" key="2"/>
<evidence type="ECO:0000269" key="3">
    <source>
    </source>
</evidence>
<evidence type="ECO:0000269" key="4">
    <source>
    </source>
</evidence>
<evidence type="ECO:0000303" key="5">
    <source>
    </source>
</evidence>
<evidence type="ECO:0000305" key="6"/>
<evidence type="ECO:0000305" key="7">
    <source>
    </source>
</evidence>
<reference key="1">
    <citation type="journal article" date="2008" name="PLoS Genet.">
        <title>Genomic islands in the pathogenic filamentous fungus Aspergillus fumigatus.</title>
        <authorList>
            <person name="Fedorova N.D."/>
            <person name="Khaldi N."/>
            <person name="Joardar V.S."/>
            <person name="Maiti R."/>
            <person name="Amedeo P."/>
            <person name="Anderson M.J."/>
            <person name="Crabtree J."/>
            <person name="Silva J.C."/>
            <person name="Badger J.H."/>
            <person name="Albarraq A."/>
            <person name="Angiuoli S."/>
            <person name="Bussey H."/>
            <person name="Bowyer P."/>
            <person name="Cotty P.J."/>
            <person name="Dyer P.S."/>
            <person name="Egan A."/>
            <person name="Galens K."/>
            <person name="Fraser-Liggett C.M."/>
            <person name="Haas B.J."/>
            <person name="Inman J.M."/>
            <person name="Kent R."/>
            <person name="Lemieux S."/>
            <person name="Malavazi I."/>
            <person name="Orvis J."/>
            <person name="Roemer T."/>
            <person name="Ronning C.M."/>
            <person name="Sundaram J.P."/>
            <person name="Sutton G."/>
            <person name="Turner G."/>
            <person name="Venter J.C."/>
            <person name="White O.R."/>
            <person name="Whitty B.R."/>
            <person name="Youngman P."/>
            <person name="Wolfe K.H."/>
            <person name="Goldman G.H."/>
            <person name="Wortman J.R."/>
            <person name="Jiang B."/>
            <person name="Denning D.W."/>
            <person name="Nierman W.C."/>
        </authorList>
    </citation>
    <scope>NUCLEOTIDE SEQUENCE [LARGE SCALE GENOMIC DNA]</scope>
    <source>
        <strain>ATCC 1007 / CBS 513.65 / DSM 816 / NCTC 3887 / NRRL 1 / QM 1276 / 107</strain>
    </source>
</reference>
<reference key="2">
    <citation type="journal article" date="2013" name="Org. Lett.">
        <title>Identification of ophiobolin F synthase by a genome mining approach: a sesterterpene synthase from Aspergillus clavatus.</title>
        <authorList>
            <person name="Chiba R."/>
            <person name="Minami A."/>
            <person name="Gomi K."/>
            <person name="Oikawa H."/>
        </authorList>
    </citation>
    <scope>FUNCTION</scope>
</reference>
<reference key="3">
    <citation type="journal article" date="2016" name="Org. Lett.">
        <title>Multiple oxidative modifications in the ophiobolin biosynthesis: P450 oxidations found in genome mining.</title>
        <authorList>
            <person name="Narita K."/>
            <person name="Chiba R."/>
            <person name="Minami A."/>
            <person name="Kodama M."/>
            <person name="Fujii I."/>
            <person name="Gomi K."/>
            <person name="Oikawa H."/>
        </authorList>
    </citation>
    <scope>FUNCTION</scope>
    <scope>CATALYTIC ACTIVITY</scope>
    <scope>PATHWAY</scope>
</reference>
<dbReference type="EC" id="1.-.-.-" evidence="4"/>
<dbReference type="EMBL" id="DS027045">
    <property type="protein sequence ID" value="EAW14643.1"/>
    <property type="molecule type" value="Genomic_DNA"/>
</dbReference>
<dbReference type="RefSeq" id="XP_001276069.1">
    <property type="nucleotide sequence ID" value="XM_001276068.1"/>
</dbReference>
<dbReference type="SMR" id="A1C8C2"/>
<dbReference type="STRING" id="344612.A1C8C2"/>
<dbReference type="EnsemblFungi" id="EAW14643">
    <property type="protein sequence ID" value="EAW14643"/>
    <property type="gene ID" value="ACLA_076840"/>
</dbReference>
<dbReference type="GeneID" id="4708280"/>
<dbReference type="KEGG" id="act:ACLA_076840"/>
<dbReference type="VEuPathDB" id="FungiDB:ACLA_076840"/>
<dbReference type="eggNOG" id="KOG0158">
    <property type="taxonomic scope" value="Eukaryota"/>
</dbReference>
<dbReference type="HOGENOM" id="CLU_001570_14_4_1"/>
<dbReference type="OMA" id="SDVKQAH"/>
<dbReference type="OrthoDB" id="3945418at2759"/>
<dbReference type="UniPathway" id="UPA00213"/>
<dbReference type="Proteomes" id="UP000006701">
    <property type="component" value="Unassembled WGS sequence"/>
</dbReference>
<dbReference type="GO" id="GO:0016020">
    <property type="term" value="C:membrane"/>
    <property type="evidence" value="ECO:0007669"/>
    <property type="project" value="UniProtKB-SubCell"/>
</dbReference>
<dbReference type="GO" id="GO:0020037">
    <property type="term" value="F:heme binding"/>
    <property type="evidence" value="ECO:0007669"/>
    <property type="project" value="InterPro"/>
</dbReference>
<dbReference type="GO" id="GO:0005506">
    <property type="term" value="F:iron ion binding"/>
    <property type="evidence" value="ECO:0007669"/>
    <property type="project" value="InterPro"/>
</dbReference>
<dbReference type="GO" id="GO:0004497">
    <property type="term" value="F:monooxygenase activity"/>
    <property type="evidence" value="ECO:0007669"/>
    <property type="project" value="UniProtKB-KW"/>
</dbReference>
<dbReference type="GO" id="GO:0016705">
    <property type="term" value="F:oxidoreductase activity, acting on paired donors, with incorporation or reduction of molecular oxygen"/>
    <property type="evidence" value="ECO:0007669"/>
    <property type="project" value="InterPro"/>
</dbReference>
<dbReference type="GO" id="GO:0016114">
    <property type="term" value="P:terpenoid biosynthetic process"/>
    <property type="evidence" value="ECO:0007669"/>
    <property type="project" value="UniProtKB-UniPathway"/>
</dbReference>
<dbReference type="CDD" id="cd11062">
    <property type="entry name" value="CYP58-like"/>
    <property type="match status" value="1"/>
</dbReference>
<dbReference type="Gene3D" id="1.10.630.10">
    <property type="entry name" value="Cytochrome P450"/>
    <property type="match status" value="1"/>
</dbReference>
<dbReference type="InterPro" id="IPR001128">
    <property type="entry name" value="Cyt_P450"/>
</dbReference>
<dbReference type="InterPro" id="IPR017972">
    <property type="entry name" value="Cyt_P450_CS"/>
</dbReference>
<dbReference type="InterPro" id="IPR002403">
    <property type="entry name" value="Cyt_P450_E_grp-IV"/>
</dbReference>
<dbReference type="InterPro" id="IPR036396">
    <property type="entry name" value="Cyt_P450_sf"/>
</dbReference>
<dbReference type="InterPro" id="IPR050121">
    <property type="entry name" value="Cytochrome_P450_monoxygenase"/>
</dbReference>
<dbReference type="PANTHER" id="PTHR24305">
    <property type="entry name" value="CYTOCHROME P450"/>
    <property type="match status" value="1"/>
</dbReference>
<dbReference type="PANTHER" id="PTHR24305:SF157">
    <property type="entry name" value="N-ACETYLTRYPTOPHAN 6-HYDROXYLASE IVOC-RELATED"/>
    <property type="match status" value="1"/>
</dbReference>
<dbReference type="Pfam" id="PF00067">
    <property type="entry name" value="p450"/>
    <property type="match status" value="1"/>
</dbReference>
<dbReference type="PRINTS" id="PR00465">
    <property type="entry name" value="EP450IV"/>
</dbReference>
<dbReference type="PRINTS" id="PR00385">
    <property type="entry name" value="P450"/>
</dbReference>
<dbReference type="SUPFAM" id="SSF48264">
    <property type="entry name" value="Cytochrome P450"/>
    <property type="match status" value="1"/>
</dbReference>
<dbReference type="PROSITE" id="PS00086">
    <property type="entry name" value="CYTOCHROME_P450"/>
    <property type="match status" value="1"/>
</dbReference>
<gene>
    <name evidence="5" type="primary">oblB</name>
    <name type="ORF">ACLA_076840</name>
</gene>
<keyword id="KW-0349">Heme</keyword>
<keyword id="KW-0408">Iron</keyword>
<keyword id="KW-0472">Membrane</keyword>
<keyword id="KW-0479">Metal-binding</keyword>
<keyword id="KW-0503">Monooxygenase</keyword>
<keyword id="KW-0560">Oxidoreductase</keyword>
<keyword id="KW-1185">Reference proteome</keyword>
<keyword id="KW-0812">Transmembrane</keyword>
<keyword id="KW-1133">Transmembrane helix</keyword>
<feature type="chain" id="PRO_0000451169" description="Cytochrome P450 monooxygenase oblB">
    <location>
        <begin position="1"/>
        <end position="520"/>
    </location>
</feature>
<feature type="transmembrane region" description="Helical" evidence="2">
    <location>
        <begin position="17"/>
        <end position="37"/>
    </location>
</feature>
<feature type="transmembrane region" description="Helical" evidence="2">
    <location>
        <begin position="229"/>
        <end position="249"/>
    </location>
</feature>
<feature type="transmembrane region" description="Helical" evidence="2">
    <location>
        <begin position="320"/>
        <end position="340"/>
    </location>
</feature>
<feature type="binding site" description="axial binding residue" evidence="1">
    <location>
        <position position="462"/>
    </location>
    <ligand>
        <name>heme</name>
        <dbReference type="ChEBI" id="CHEBI:30413"/>
    </ligand>
    <ligandPart>
        <name>Fe</name>
        <dbReference type="ChEBI" id="CHEBI:18248"/>
    </ligandPart>
</feature>